<reference key="1">
    <citation type="submission" date="2003-01" db="EMBL/GenBank/DDBJ databases">
        <title>Chloroplast DNA phylogeny of tribe Heliantheae (Asteraceae).</title>
        <authorList>
            <person name="Panero J.L."/>
            <person name="Baldwin B.G."/>
            <person name="Schilling E.E."/>
            <person name="Clevinger J.A."/>
        </authorList>
    </citation>
    <scope>NUCLEOTIDE SEQUENCE [LARGE SCALE GENOMIC DNA]</scope>
</reference>
<evidence type="ECO:0000255" key="1">
    <source>
        <dbReference type="HAMAP-Rule" id="MF_01351"/>
    </source>
</evidence>
<geneLocation type="chloroplast"/>
<protein>
    <recommendedName>
        <fullName evidence="1">NAD(P)H-quinone oxidoreductase subunit I, chloroplastic</fullName>
        <ecNumber evidence="1">7.1.1.-</ecNumber>
    </recommendedName>
    <alternativeName>
        <fullName evidence="1">NAD(P)H dehydrogenase subunit I</fullName>
        <shortName evidence="1">NDH subunit I</shortName>
    </alternativeName>
    <alternativeName>
        <fullName evidence="1">NADH-plastoquinone oxidoreductase subunit I</fullName>
    </alternativeName>
</protein>
<feature type="chain" id="PRO_0000245653" description="NAD(P)H-quinone oxidoreductase subunit I, chloroplastic">
    <location>
        <begin position="1"/>
        <end position="166"/>
    </location>
</feature>
<feature type="domain" description="4Fe-4S ferredoxin-type 1" evidence="1">
    <location>
        <begin position="55"/>
        <end position="84"/>
    </location>
</feature>
<feature type="domain" description="4Fe-4S ferredoxin-type 2" evidence="1">
    <location>
        <begin position="95"/>
        <end position="124"/>
    </location>
</feature>
<feature type="binding site" evidence="1">
    <location>
        <position position="64"/>
    </location>
    <ligand>
        <name>[4Fe-4S] cluster</name>
        <dbReference type="ChEBI" id="CHEBI:49883"/>
        <label>1</label>
    </ligand>
</feature>
<feature type="binding site" evidence="1">
    <location>
        <position position="67"/>
    </location>
    <ligand>
        <name>[4Fe-4S] cluster</name>
        <dbReference type="ChEBI" id="CHEBI:49883"/>
        <label>1</label>
    </ligand>
</feature>
<feature type="binding site" evidence="1">
    <location>
        <position position="70"/>
    </location>
    <ligand>
        <name>[4Fe-4S] cluster</name>
        <dbReference type="ChEBI" id="CHEBI:49883"/>
        <label>1</label>
    </ligand>
</feature>
<feature type="binding site" evidence="1">
    <location>
        <position position="74"/>
    </location>
    <ligand>
        <name>[4Fe-4S] cluster</name>
        <dbReference type="ChEBI" id="CHEBI:49883"/>
        <label>2</label>
    </ligand>
</feature>
<feature type="binding site" evidence="1">
    <location>
        <position position="104"/>
    </location>
    <ligand>
        <name>[4Fe-4S] cluster</name>
        <dbReference type="ChEBI" id="CHEBI:49883"/>
        <label>2</label>
    </ligand>
</feature>
<feature type="binding site" evidence="1">
    <location>
        <position position="107"/>
    </location>
    <ligand>
        <name>[4Fe-4S] cluster</name>
        <dbReference type="ChEBI" id="CHEBI:49883"/>
        <label>2</label>
    </ligand>
</feature>
<feature type="binding site" evidence="1">
    <location>
        <position position="110"/>
    </location>
    <ligand>
        <name>[4Fe-4S] cluster</name>
        <dbReference type="ChEBI" id="CHEBI:49883"/>
        <label>2</label>
    </ligand>
</feature>
<feature type="binding site" evidence="1">
    <location>
        <position position="114"/>
    </location>
    <ligand>
        <name>[4Fe-4S] cluster</name>
        <dbReference type="ChEBI" id="CHEBI:49883"/>
        <label>1</label>
    </ligand>
</feature>
<sequence>MFPMVTEFMNYGQQTVRAARYIGQGFMITLSHANRLPVTIQYPYEKLITSERFRGRIHFEFDKCIACEVCVRVCPIDLPVVDWKLETDIRKKRLLNYSIDFGICIFCGNCVEYCPTNCLSMTEEYELSTYDRHELNYNQIALGRLPISIIDDYTIRTILNLPEIKT</sequence>
<organism>
    <name type="scientific">Picradeniopsis absinthifolia</name>
    <name type="common">Hairyseed bahia</name>
    <name type="synonym">Bahia absinthifolia</name>
    <dbReference type="NCBI Taxonomy" id="41490"/>
    <lineage>
        <taxon>Eukaryota</taxon>
        <taxon>Viridiplantae</taxon>
        <taxon>Streptophyta</taxon>
        <taxon>Embryophyta</taxon>
        <taxon>Tracheophyta</taxon>
        <taxon>Spermatophyta</taxon>
        <taxon>Magnoliopsida</taxon>
        <taxon>eudicotyledons</taxon>
        <taxon>Gunneridae</taxon>
        <taxon>Pentapetalae</taxon>
        <taxon>asterids</taxon>
        <taxon>campanulids</taxon>
        <taxon>Asterales</taxon>
        <taxon>Asteraceae</taxon>
        <taxon>Asteroideae</taxon>
        <taxon>Heliantheae alliance</taxon>
        <taxon>Bahieae</taxon>
        <taxon>Picradeniopsis</taxon>
    </lineage>
</organism>
<proteinExistence type="inferred from homology"/>
<dbReference type="EC" id="7.1.1.-" evidence="1"/>
<dbReference type="EMBL" id="AF383758">
    <property type="protein sequence ID" value="AAN61700.1"/>
    <property type="molecule type" value="Genomic_DNA"/>
</dbReference>
<dbReference type="SMR" id="Q8HVV4"/>
<dbReference type="GO" id="GO:0009535">
    <property type="term" value="C:chloroplast thylakoid membrane"/>
    <property type="evidence" value="ECO:0007669"/>
    <property type="project" value="UniProtKB-SubCell"/>
</dbReference>
<dbReference type="GO" id="GO:0051539">
    <property type="term" value="F:4 iron, 4 sulfur cluster binding"/>
    <property type="evidence" value="ECO:0007669"/>
    <property type="project" value="UniProtKB-KW"/>
</dbReference>
<dbReference type="GO" id="GO:0005506">
    <property type="term" value="F:iron ion binding"/>
    <property type="evidence" value="ECO:0007669"/>
    <property type="project" value="UniProtKB-UniRule"/>
</dbReference>
<dbReference type="GO" id="GO:0008137">
    <property type="term" value="F:NADH dehydrogenase (ubiquinone) activity"/>
    <property type="evidence" value="ECO:0007669"/>
    <property type="project" value="InterPro"/>
</dbReference>
<dbReference type="GO" id="GO:0048038">
    <property type="term" value="F:quinone binding"/>
    <property type="evidence" value="ECO:0007669"/>
    <property type="project" value="UniProtKB-KW"/>
</dbReference>
<dbReference type="GO" id="GO:0019684">
    <property type="term" value="P:photosynthesis, light reaction"/>
    <property type="evidence" value="ECO:0007669"/>
    <property type="project" value="UniProtKB-UniRule"/>
</dbReference>
<dbReference type="FunFam" id="3.30.70.3270:FF:000006">
    <property type="entry name" value="NAD(P)H-quinone oxidoreductase subunit I, chloroplastic"/>
    <property type="match status" value="1"/>
</dbReference>
<dbReference type="Gene3D" id="3.30.70.3270">
    <property type="match status" value="1"/>
</dbReference>
<dbReference type="HAMAP" id="MF_01351">
    <property type="entry name" value="NDH1_NuoI"/>
    <property type="match status" value="1"/>
</dbReference>
<dbReference type="InterPro" id="IPR017896">
    <property type="entry name" value="4Fe4S_Fe-S-bd"/>
</dbReference>
<dbReference type="InterPro" id="IPR017900">
    <property type="entry name" value="4Fe4S_Fe_S_CS"/>
</dbReference>
<dbReference type="InterPro" id="IPR010226">
    <property type="entry name" value="NADH_quinone_OxRdtase_chainI"/>
</dbReference>
<dbReference type="InterPro" id="IPR004497">
    <property type="entry name" value="NDHI"/>
</dbReference>
<dbReference type="NCBIfam" id="TIGR00403">
    <property type="entry name" value="ndhI"/>
    <property type="match status" value="1"/>
</dbReference>
<dbReference type="NCBIfam" id="TIGR01971">
    <property type="entry name" value="NuoI"/>
    <property type="match status" value="1"/>
</dbReference>
<dbReference type="NCBIfam" id="NF004537">
    <property type="entry name" value="PRK05888.1-3"/>
    <property type="match status" value="1"/>
</dbReference>
<dbReference type="PANTHER" id="PTHR47275">
    <property type="entry name" value="NAD(P)H-QUINONE OXIDOREDUCTASE SUBUNIT I, CHLOROPLASTIC"/>
    <property type="match status" value="1"/>
</dbReference>
<dbReference type="PANTHER" id="PTHR47275:SF1">
    <property type="entry name" value="NAD(P)H-QUINONE OXIDOREDUCTASE SUBUNIT I, CHLOROPLASTIC"/>
    <property type="match status" value="1"/>
</dbReference>
<dbReference type="Pfam" id="PF00037">
    <property type="entry name" value="Fer4"/>
    <property type="match status" value="2"/>
</dbReference>
<dbReference type="SUPFAM" id="SSF54862">
    <property type="entry name" value="4Fe-4S ferredoxins"/>
    <property type="match status" value="1"/>
</dbReference>
<dbReference type="PROSITE" id="PS00198">
    <property type="entry name" value="4FE4S_FER_1"/>
    <property type="match status" value="2"/>
</dbReference>
<dbReference type="PROSITE" id="PS51379">
    <property type="entry name" value="4FE4S_FER_2"/>
    <property type="match status" value="2"/>
</dbReference>
<gene>
    <name evidence="1" type="primary">ndhI</name>
</gene>
<keyword id="KW-0004">4Fe-4S</keyword>
<keyword id="KW-0150">Chloroplast</keyword>
<keyword id="KW-0408">Iron</keyword>
<keyword id="KW-0411">Iron-sulfur</keyword>
<keyword id="KW-0472">Membrane</keyword>
<keyword id="KW-0479">Metal-binding</keyword>
<keyword id="KW-0520">NAD</keyword>
<keyword id="KW-0521">NADP</keyword>
<keyword id="KW-0934">Plastid</keyword>
<keyword id="KW-0618">Plastoquinone</keyword>
<keyword id="KW-0874">Quinone</keyword>
<keyword id="KW-0677">Repeat</keyword>
<keyword id="KW-0793">Thylakoid</keyword>
<keyword id="KW-1278">Translocase</keyword>
<comment type="function">
    <text evidence="1">NDH shuttles electrons from NAD(P)H:plastoquinone, via FMN and iron-sulfur (Fe-S) centers, to quinones in the photosynthetic chain and possibly in a chloroplast respiratory chain. The immediate electron acceptor for the enzyme in this species is believed to be plastoquinone. Couples the redox reaction to proton translocation, and thus conserves the redox energy in a proton gradient.</text>
</comment>
<comment type="catalytic activity">
    <reaction evidence="1">
        <text>a plastoquinone + NADH + (n+1) H(+)(in) = a plastoquinol + NAD(+) + n H(+)(out)</text>
        <dbReference type="Rhea" id="RHEA:42608"/>
        <dbReference type="Rhea" id="RHEA-COMP:9561"/>
        <dbReference type="Rhea" id="RHEA-COMP:9562"/>
        <dbReference type="ChEBI" id="CHEBI:15378"/>
        <dbReference type="ChEBI" id="CHEBI:17757"/>
        <dbReference type="ChEBI" id="CHEBI:57540"/>
        <dbReference type="ChEBI" id="CHEBI:57945"/>
        <dbReference type="ChEBI" id="CHEBI:62192"/>
    </reaction>
</comment>
<comment type="catalytic activity">
    <reaction evidence="1">
        <text>a plastoquinone + NADPH + (n+1) H(+)(in) = a plastoquinol + NADP(+) + n H(+)(out)</text>
        <dbReference type="Rhea" id="RHEA:42612"/>
        <dbReference type="Rhea" id="RHEA-COMP:9561"/>
        <dbReference type="Rhea" id="RHEA-COMP:9562"/>
        <dbReference type="ChEBI" id="CHEBI:15378"/>
        <dbReference type="ChEBI" id="CHEBI:17757"/>
        <dbReference type="ChEBI" id="CHEBI:57783"/>
        <dbReference type="ChEBI" id="CHEBI:58349"/>
        <dbReference type="ChEBI" id="CHEBI:62192"/>
    </reaction>
</comment>
<comment type="cofactor">
    <cofactor evidence="1">
        <name>[4Fe-4S] cluster</name>
        <dbReference type="ChEBI" id="CHEBI:49883"/>
    </cofactor>
    <text evidence="1">Binds 2 [4Fe-4S] clusters per subunit.</text>
</comment>
<comment type="subunit">
    <text evidence="1">NDH is composed of at least 16 different subunits, 5 of which are encoded in the nucleus.</text>
</comment>
<comment type="subcellular location">
    <subcellularLocation>
        <location evidence="1">Plastid</location>
        <location evidence="1">Chloroplast thylakoid membrane</location>
        <topology evidence="1">Peripheral membrane protein</topology>
    </subcellularLocation>
</comment>
<comment type="similarity">
    <text evidence="1">Belongs to the complex I 23 kDa subunit family.</text>
</comment>
<name>NDHI_PICAS</name>
<accession>Q8HVV4</accession>